<comment type="subcellular location">
    <subcellularLocation>
        <location evidence="1">Secreted</location>
    </subcellularLocation>
</comment>
<comment type="similarity">
    <text evidence="3">Belongs to the DEFL family.</text>
</comment>
<comment type="caution">
    <text evidence="3">Lacks 1 of the 4 disulfide bonds, which are conserved features of the family.</text>
</comment>
<name>DEF12_ARATH</name>
<protein>
    <recommendedName>
        <fullName>Putative defensin-like protein 12</fullName>
    </recommendedName>
</protein>
<sequence length="74" mass="8245">MAKPCAAFLVFLCLSMLILSIPDISCQMNDCDCDHDHRCGEWEDESHGNCKQHHLRVVCTCTLDCLDISSTSNA</sequence>
<proteinExistence type="inferred from homology"/>
<feature type="signal peptide" evidence="2">
    <location>
        <begin position="1"/>
        <end position="26"/>
    </location>
</feature>
<feature type="chain" id="PRO_0000379599" description="Putative defensin-like protein 12">
    <location>
        <begin position="27"/>
        <end position="74"/>
    </location>
</feature>
<feature type="disulfide bond" evidence="1">
    <location>
        <begin position="26"/>
        <end position="50"/>
    </location>
</feature>
<feature type="disulfide bond" evidence="1">
    <location>
        <begin position="33"/>
        <end position="59"/>
    </location>
</feature>
<feature type="disulfide bond" evidence="1">
    <location>
        <begin position="39"/>
        <end position="61"/>
    </location>
</feature>
<evidence type="ECO:0000250" key="1"/>
<evidence type="ECO:0000255" key="2"/>
<evidence type="ECO:0000305" key="3"/>
<gene>
    <name type="ordered locus">At2g19893</name>
    <name type="ORF">F6F22</name>
</gene>
<reference key="1">
    <citation type="journal article" date="1999" name="Nature">
        <title>Sequence and analysis of chromosome 2 of the plant Arabidopsis thaliana.</title>
        <authorList>
            <person name="Lin X."/>
            <person name="Kaul S."/>
            <person name="Rounsley S.D."/>
            <person name="Shea T.P."/>
            <person name="Benito M.-I."/>
            <person name="Town C.D."/>
            <person name="Fujii C.Y."/>
            <person name="Mason T.M."/>
            <person name="Bowman C.L."/>
            <person name="Barnstead M.E."/>
            <person name="Feldblyum T.V."/>
            <person name="Buell C.R."/>
            <person name="Ketchum K.A."/>
            <person name="Lee J.J."/>
            <person name="Ronning C.M."/>
            <person name="Koo H.L."/>
            <person name="Moffat K.S."/>
            <person name="Cronin L.A."/>
            <person name="Shen M."/>
            <person name="Pai G."/>
            <person name="Van Aken S."/>
            <person name="Umayam L."/>
            <person name="Tallon L.J."/>
            <person name="Gill J.E."/>
            <person name="Adams M.D."/>
            <person name="Carrera A.J."/>
            <person name="Creasy T.H."/>
            <person name="Goodman H.M."/>
            <person name="Somerville C.R."/>
            <person name="Copenhaver G.P."/>
            <person name="Preuss D."/>
            <person name="Nierman W.C."/>
            <person name="White O."/>
            <person name="Eisen J.A."/>
            <person name="Salzberg S.L."/>
            <person name="Fraser C.M."/>
            <person name="Venter J.C."/>
        </authorList>
    </citation>
    <scope>NUCLEOTIDE SEQUENCE [LARGE SCALE GENOMIC DNA]</scope>
    <source>
        <strain>cv. Columbia</strain>
    </source>
</reference>
<reference key="2">
    <citation type="journal article" date="2017" name="Plant J.">
        <title>Araport11: a complete reannotation of the Arabidopsis thaliana reference genome.</title>
        <authorList>
            <person name="Cheng C.Y."/>
            <person name="Krishnakumar V."/>
            <person name="Chan A.P."/>
            <person name="Thibaud-Nissen F."/>
            <person name="Schobel S."/>
            <person name="Town C.D."/>
        </authorList>
    </citation>
    <scope>GENOME REANNOTATION</scope>
    <source>
        <strain>cv. Columbia</strain>
    </source>
</reference>
<reference key="3">
    <citation type="journal article" date="2005" name="Plant Physiol.">
        <title>Genome organization of more than 300 defensin-like genes in Arabidopsis.</title>
        <authorList>
            <person name="Silverstein K.A.T."/>
            <person name="Graham M.A."/>
            <person name="Paape T.D."/>
            <person name="VandenBosch K.A."/>
        </authorList>
    </citation>
    <scope>GENE FAMILY</scope>
</reference>
<keyword id="KW-0929">Antimicrobial</keyword>
<keyword id="KW-1015">Disulfide bond</keyword>
<keyword id="KW-0295">Fungicide</keyword>
<keyword id="KW-0611">Plant defense</keyword>
<keyword id="KW-1185">Reference proteome</keyword>
<keyword id="KW-0964">Secreted</keyword>
<keyword id="KW-0732">Signal</keyword>
<organism>
    <name type="scientific">Arabidopsis thaliana</name>
    <name type="common">Mouse-ear cress</name>
    <dbReference type="NCBI Taxonomy" id="3702"/>
    <lineage>
        <taxon>Eukaryota</taxon>
        <taxon>Viridiplantae</taxon>
        <taxon>Streptophyta</taxon>
        <taxon>Embryophyta</taxon>
        <taxon>Tracheophyta</taxon>
        <taxon>Spermatophyta</taxon>
        <taxon>Magnoliopsida</taxon>
        <taxon>eudicotyledons</taxon>
        <taxon>Gunneridae</taxon>
        <taxon>Pentapetalae</taxon>
        <taxon>rosids</taxon>
        <taxon>malvids</taxon>
        <taxon>Brassicales</taxon>
        <taxon>Brassicaceae</taxon>
        <taxon>Camelineae</taxon>
        <taxon>Arabidopsis</taxon>
    </lineage>
</organism>
<dbReference type="EMBL" id="AC005169">
    <property type="status" value="NOT_ANNOTATED_CDS"/>
    <property type="molecule type" value="Genomic_DNA"/>
</dbReference>
<dbReference type="EMBL" id="CP002685">
    <property type="protein sequence ID" value="AEC06940.1"/>
    <property type="molecule type" value="Genomic_DNA"/>
</dbReference>
<dbReference type="RefSeq" id="NP_001031376.1">
    <property type="nucleotide sequence ID" value="NM_001036299.1"/>
</dbReference>
<dbReference type="SMR" id="Q2V477"/>
<dbReference type="STRING" id="3702.Q2V477"/>
<dbReference type="PaxDb" id="3702-AT2G19893.1"/>
<dbReference type="EnsemblPlants" id="AT2G19893.1">
    <property type="protein sequence ID" value="AT2G19893.1"/>
    <property type="gene ID" value="AT2G19893"/>
</dbReference>
<dbReference type="GeneID" id="3768542"/>
<dbReference type="Gramene" id="AT2G19893.1">
    <property type="protein sequence ID" value="AT2G19893.1"/>
    <property type="gene ID" value="AT2G19893"/>
</dbReference>
<dbReference type="KEGG" id="ath:AT2G19893"/>
<dbReference type="Araport" id="AT2G19893"/>
<dbReference type="TAIR" id="AT2G19893"/>
<dbReference type="HOGENOM" id="CLU_2691146_0_0_1"/>
<dbReference type="InParanoid" id="Q2V477"/>
<dbReference type="OMA" id="MAKPCAA"/>
<dbReference type="OrthoDB" id="1035809at2759"/>
<dbReference type="PRO" id="PR:Q2V477"/>
<dbReference type="Proteomes" id="UP000006548">
    <property type="component" value="Chromosome 2"/>
</dbReference>
<dbReference type="ExpressionAtlas" id="Q2V477">
    <property type="expression patterns" value="baseline and differential"/>
</dbReference>
<dbReference type="GO" id="GO:0005576">
    <property type="term" value="C:extracellular region"/>
    <property type="evidence" value="ECO:0007669"/>
    <property type="project" value="UniProtKB-SubCell"/>
</dbReference>
<dbReference type="GO" id="GO:0050832">
    <property type="term" value="P:defense response to fungus"/>
    <property type="evidence" value="ECO:0007669"/>
    <property type="project" value="UniProtKB-KW"/>
</dbReference>
<dbReference type="GO" id="GO:0031640">
    <property type="term" value="P:killing of cells of another organism"/>
    <property type="evidence" value="ECO:0007669"/>
    <property type="project" value="UniProtKB-KW"/>
</dbReference>
<accession>Q2V477</accession>